<proteinExistence type="evidence at protein level"/>
<protein>
    <recommendedName>
        <fullName>Protein FAM200A</fullName>
    </recommendedName>
</protein>
<gene>
    <name type="primary">FAM200A</name>
    <name type="synonym">C7orf38</name>
</gene>
<organism>
    <name type="scientific">Homo sapiens</name>
    <name type="common">Human</name>
    <dbReference type="NCBI Taxonomy" id="9606"/>
    <lineage>
        <taxon>Eukaryota</taxon>
        <taxon>Metazoa</taxon>
        <taxon>Chordata</taxon>
        <taxon>Craniata</taxon>
        <taxon>Vertebrata</taxon>
        <taxon>Euteleostomi</taxon>
        <taxon>Mammalia</taxon>
        <taxon>Eutheria</taxon>
        <taxon>Euarchontoglires</taxon>
        <taxon>Primates</taxon>
        <taxon>Haplorrhini</taxon>
        <taxon>Catarrhini</taxon>
        <taxon>Hominidae</taxon>
        <taxon>Homo</taxon>
    </lineage>
</organism>
<sequence length="573" mass="66276">MTPESRDTTDLSPGGTQEMEGIVIVKVEEEDEEDHFQKERNKVESSPQVLSRSTTMNERALLSSYLVAYRVAKEKMAHTAAEKIILPACMDMVRTIFDDKSADKLRTIPLSDNTISRRICTIAKHLEAMLITRLQSGIDFAIQLDESTDIASCPTLLVYVRYVWQDDFVEDLLCCLNLNSHITGLDLFTELENCLLGQYKLNWKHCKGISSDGTANMTGKHSRLTEKLLEATHNNAVWNHCFIHREALVSKEISPSLMDVLKNAVKTVNFIKGSSLNSRLLEIFCSEIGVNHTHLLFHTEVRWLSQGKVLSRVYELRNEIYIFLVEKQSHLANIFEDDIWVTKLAYLSDIFGILNELSLKMQGKNNDIFQYLEHILGFQKTLLLWQARLKSNRPSYYMFPTLLQHIEENIINEDCLKEIKLEILLHLTSLSQTFNYYFPEEKFESLKENIWMKDPFAFQNPESIIELNLEPEEENELLQLSSSFTLKNYYKILSLSAFWIKIKDDFPLLSRKSILLLLPFTTTYLCELGFSILTRLKTKKRNRLNSAPDMRVALSSCVPDWKELMNRQAHPSH</sequence>
<accession>Q8TCP9</accession>
<accession>A4D293</accession>
<accession>A8K3V9</accession>
<accession>B2RD92</accession>
<accession>C9J6A8</accession>
<accession>D6W5T2</accession>
<accession>Q8N9P3</accession>
<comment type="interaction">
    <interactant intactId="EBI-2799179">
        <id>Q8TCP9</id>
    </interactant>
    <interactant intactId="EBI-6654703">
        <id>Q14498-3</id>
        <label>RBM39</label>
    </interactant>
    <organismsDiffer>false</organismsDiffer>
    <experiments>3</experiments>
</comment>
<comment type="interaction">
    <interactant intactId="EBI-2799179">
        <id>Q8TCP9</id>
    </interactant>
    <interactant intactId="EBI-2856274">
        <id>Q3MIN7</id>
        <label>RGL3</label>
    </interactant>
    <organismsDiffer>false</organismsDiffer>
    <experiments>3</experiments>
</comment>
<comment type="interaction">
    <interactant intactId="EBI-2799179">
        <id>Q8TCP9</id>
    </interactant>
    <interactant intactId="EBI-10175576">
        <id>G2XKQ0</id>
        <label>SUMO1P1</label>
    </interactant>
    <organismsDiffer>false</organismsDiffer>
    <experiments>3</experiments>
</comment>
<comment type="subcellular location">
    <subcellularLocation>
        <location evidence="3">Membrane</location>
        <topology evidence="3">Single-pass membrane protein</topology>
    </subcellularLocation>
</comment>
<comment type="similarity">
    <text evidence="3">Belongs to the FAM200 family.</text>
</comment>
<feature type="chain" id="PRO_0000279405" description="Protein FAM200A">
    <location>
        <begin position="1"/>
        <end position="573"/>
    </location>
</feature>
<feature type="topological domain" description="Extracellular" evidence="1">
    <location>
        <begin position="1"/>
        <end position="513"/>
    </location>
</feature>
<feature type="transmembrane region" description="Helical" evidence="1">
    <location>
        <begin position="514"/>
        <end position="533"/>
    </location>
</feature>
<feature type="topological domain" description="Cytoplasmic" evidence="1">
    <location>
        <begin position="534"/>
        <end position="573"/>
    </location>
</feature>
<feature type="region of interest" description="Disordered" evidence="2">
    <location>
        <begin position="1"/>
        <end position="51"/>
    </location>
</feature>
<feature type="sequence conflict" description="In Ref. 2; BAF83413." evidence="3" ref="2">
    <original>H</original>
    <variation>R</variation>
    <location>
        <position position="125"/>
    </location>
</feature>
<feature type="sequence conflict" description="In Ref. 2; BAG37839." evidence="3" ref="2">
    <original>N</original>
    <variation>S</variation>
    <location>
        <position position="202"/>
    </location>
</feature>
<feature type="sequence conflict" description="In Ref. 2; BAF83413." evidence="3" ref="2">
    <original>E</original>
    <variation>G</variation>
    <location>
        <position position="319"/>
    </location>
</feature>
<feature type="sequence conflict" description="In Ref. 2; BAC04288." evidence="3" ref="2">
    <original>H</original>
    <variation>L</variation>
    <location>
        <position position="330"/>
    </location>
</feature>
<evidence type="ECO:0000255" key="1"/>
<evidence type="ECO:0000256" key="2">
    <source>
        <dbReference type="SAM" id="MobiDB-lite"/>
    </source>
</evidence>
<evidence type="ECO:0000305" key="3"/>
<keyword id="KW-0472">Membrane</keyword>
<keyword id="KW-1267">Proteomics identification</keyword>
<keyword id="KW-1185">Reference proteome</keyword>
<keyword id="KW-0812">Transmembrane</keyword>
<keyword id="KW-1133">Transmembrane helix</keyword>
<name>F200A_HUMAN</name>
<reference key="1">
    <citation type="journal article" date="2007" name="BMC Genomics">
        <title>The full-ORF clone resource of the German cDNA consortium.</title>
        <authorList>
            <person name="Bechtel S."/>
            <person name="Rosenfelder H."/>
            <person name="Duda A."/>
            <person name="Schmidt C.P."/>
            <person name="Ernst U."/>
            <person name="Wellenreuther R."/>
            <person name="Mehrle A."/>
            <person name="Schuster C."/>
            <person name="Bahr A."/>
            <person name="Bloecker H."/>
            <person name="Heubner D."/>
            <person name="Hoerlein A."/>
            <person name="Michel G."/>
            <person name="Wedler H."/>
            <person name="Koehrer K."/>
            <person name="Ottenwaelder B."/>
            <person name="Poustka A."/>
            <person name="Wiemann S."/>
            <person name="Schupp I."/>
        </authorList>
    </citation>
    <scope>NUCLEOTIDE SEQUENCE [LARGE SCALE MRNA]</scope>
    <source>
        <tissue>Mammary cancer</tissue>
    </source>
</reference>
<reference key="2">
    <citation type="journal article" date="2004" name="Nat. Genet.">
        <title>Complete sequencing and characterization of 21,243 full-length human cDNAs.</title>
        <authorList>
            <person name="Ota T."/>
            <person name="Suzuki Y."/>
            <person name="Nishikawa T."/>
            <person name="Otsuki T."/>
            <person name="Sugiyama T."/>
            <person name="Irie R."/>
            <person name="Wakamatsu A."/>
            <person name="Hayashi K."/>
            <person name="Sato H."/>
            <person name="Nagai K."/>
            <person name="Kimura K."/>
            <person name="Makita H."/>
            <person name="Sekine M."/>
            <person name="Obayashi M."/>
            <person name="Nishi T."/>
            <person name="Shibahara T."/>
            <person name="Tanaka T."/>
            <person name="Ishii S."/>
            <person name="Yamamoto J."/>
            <person name="Saito K."/>
            <person name="Kawai Y."/>
            <person name="Isono Y."/>
            <person name="Nakamura Y."/>
            <person name="Nagahari K."/>
            <person name="Murakami K."/>
            <person name="Yasuda T."/>
            <person name="Iwayanagi T."/>
            <person name="Wagatsuma M."/>
            <person name="Shiratori A."/>
            <person name="Sudo H."/>
            <person name="Hosoiri T."/>
            <person name="Kaku Y."/>
            <person name="Kodaira H."/>
            <person name="Kondo H."/>
            <person name="Sugawara M."/>
            <person name="Takahashi M."/>
            <person name="Kanda K."/>
            <person name="Yokoi T."/>
            <person name="Furuya T."/>
            <person name="Kikkawa E."/>
            <person name="Omura Y."/>
            <person name="Abe K."/>
            <person name="Kamihara K."/>
            <person name="Katsuta N."/>
            <person name="Sato K."/>
            <person name="Tanikawa M."/>
            <person name="Yamazaki M."/>
            <person name="Ninomiya K."/>
            <person name="Ishibashi T."/>
            <person name="Yamashita H."/>
            <person name="Murakawa K."/>
            <person name="Fujimori K."/>
            <person name="Tanai H."/>
            <person name="Kimata M."/>
            <person name="Watanabe M."/>
            <person name="Hiraoka S."/>
            <person name="Chiba Y."/>
            <person name="Ishida S."/>
            <person name="Ono Y."/>
            <person name="Takiguchi S."/>
            <person name="Watanabe S."/>
            <person name="Yosida M."/>
            <person name="Hotuta T."/>
            <person name="Kusano J."/>
            <person name="Kanehori K."/>
            <person name="Takahashi-Fujii A."/>
            <person name="Hara H."/>
            <person name="Tanase T.-O."/>
            <person name="Nomura Y."/>
            <person name="Togiya S."/>
            <person name="Komai F."/>
            <person name="Hara R."/>
            <person name="Takeuchi K."/>
            <person name="Arita M."/>
            <person name="Imose N."/>
            <person name="Musashino K."/>
            <person name="Yuuki H."/>
            <person name="Oshima A."/>
            <person name="Sasaki N."/>
            <person name="Aotsuka S."/>
            <person name="Yoshikawa Y."/>
            <person name="Matsunawa H."/>
            <person name="Ichihara T."/>
            <person name="Shiohata N."/>
            <person name="Sano S."/>
            <person name="Moriya S."/>
            <person name="Momiyama H."/>
            <person name="Satoh N."/>
            <person name="Takami S."/>
            <person name="Terashima Y."/>
            <person name="Suzuki O."/>
            <person name="Nakagawa S."/>
            <person name="Senoh A."/>
            <person name="Mizoguchi H."/>
            <person name="Goto Y."/>
            <person name="Shimizu F."/>
            <person name="Wakebe H."/>
            <person name="Hishigaki H."/>
            <person name="Watanabe T."/>
            <person name="Sugiyama A."/>
            <person name="Takemoto M."/>
            <person name="Kawakami B."/>
            <person name="Yamazaki M."/>
            <person name="Watanabe K."/>
            <person name="Kumagai A."/>
            <person name="Itakura S."/>
            <person name="Fukuzumi Y."/>
            <person name="Fujimori Y."/>
            <person name="Komiyama M."/>
            <person name="Tashiro H."/>
            <person name="Tanigami A."/>
            <person name="Fujiwara T."/>
            <person name="Ono T."/>
            <person name="Yamada K."/>
            <person name="Fujii Y."/>
            <person name="Ozaki K."/>
            <person name="Hirao M."/>
            <person name="Ohmori Y."/>
            <person name="Kawabata A."/>
            <person name="Hikiji T."/>
            <person name="Kobatake N."/>
            <person name="Inagaki H."/>
            <person name="Ikema Y."/>
            <person name="Okamoto S."/>
            <person name="Okitani R."/>
            <person name="Kawakami T."/>
            <person name="Noguchi S."/>
            <person name="Itoh T."/>
            <person name="Shigeta K."/>
            <person name="Senba T."/>
            <person name="Matsumura K."/>
            <person name="Nakajima Y."/>
            <person name="Mizuno T."/>
            <person name="Morinaga M."/>
            <person name="Sasaki M."/>
            <person name="Togashi T."/>
            <person name="Oyama M."/>
            <person name="Hata H."/>
            <person name="Watanabe M."/>
            <person name="Komatsu T."/>
            <person name="Mizushima-Sugano J."/>
            <person name="Satoh T."/>
            <person name="Shirai Y."/>
            <person name="Takahashi Y."/>
            <person name="Nakagawa K."/>
            <person name="Okumura K."/>
            <person name="Nagase T."/>
            <person name="Nomura N."/>
            <person name="Kikuchi H."/>
            <person name="Masuho Y."/>
            <person name="Yamashita R."/>
            <person name="Nakai K."/>
            <person name="Yada T."/>
            <person name="Nakamura Y."/>
            <person name="Ohara O."/>
            <person name="Isogai T."/>
            <person name="Sugano S."/>
        </authorList>
    </citation>
    <scope>NUCLEOTIDE SEQUENCE [LARGE SCALE MRNA]</scope>
    <source>
        <tissue>Adrenal gland</tissue>
    </source>
</reference>
<reference key="3">
    <citation type="journal article" date="2003" name="Nature">
        <title>The DNA sequence of human chromosome 7.</title>
        <authorList>
            <person name="Hillier L.W."/>
            <person name="Fulton R.S."/>
            <person name="Fulton L.A."/>
            <person name="Graves T.A."/>
            <person name="Pepin K.H."/>
            <person name="Wagner-McPherson C."/>
            <person name="Layman D."/>
            <person name="Maas J."/>
            <person name="Jaeger S."/>
            <person name="Walker R."/>
            <person name="Wylie K."/>
            <person name="Sekhon M."/>
            <person name="Becker M.C."/>
            <person name="O'Laughlin M.D."/>
            <person name="Schaller M.E."/>
            <person name="Fewell G.A."/>
            <person name="Delehaunty K.D."/>
            <person name="Miner T.L."/>
            <person name="Nash W.E."/>
            <person name="Cordes M."/>
            <person name="Du H."/>
            <person name="Sun H."/>
            <person name="Edwards J."/>
            <person name="Bradshaw-Cordum H."/>
            <person name="Ali J."/>
            <person name="Andrews S."/>
            <person name="Isak A."/>
            <person name="Vanbrunt A."/>
            <person name="Nguyen C."/>
            <person name="Du F."/>
            <person name="Lamar B."/>
            <person name="Courtney L."/>
            <person name="Kalicki J."/>
            <person name="Ozersky P."/>
            <person name="Bielicki L."/>
            <person name="Scott K."/>
            <person name="Holmes A."/>
            <person name="Harkins R."/>
            <person name="Harris A."/>
            <person name="Strong C.M."/>
            <person name="Hou S."/>
            <person name="Tomlinson C."/>
            <person name="Dauphin-Kohlberg S."/>
            <person name="Kozlowicz-Reilly A."/>
            <person name="Leonard S."/>
            <person name="Rohlfing T."/>
            <person name="Rock S.M."/>
            <person name="Tin-Wollam A.-M."/>
            <person name="Abbott A."/>
            <person name="Minx P."/>
            <person name="Maupin R."/>
            <person name="Strowmatt C."/>
            <person name="Latreille P."/>
            <person name="Miller N."/>
            <person name="Johnson D."/>
            <person name="Murray J."/>
            <person name="Woessner J.P."/>
            <person name="Wendl M.C."/>
            <person name="Yang S.-P."/>
            <person name="Schultz B.R."/>
            <person name="Wallis J.W."/>
            <person name="Spieth J."/>
            <person name="Bieri T.A."/>
            <person name="Nelson J.O."/>
            <person name="Berkowicz N."/>
            <person name="Wohldmann P.E."/>
            <person name="Cook L.L."/>
            <person name="Hickenbotham M.T."/>
            <person name="Eldred J."/>
            <person name="Williams D."/>
            <person name="Bedell J.A."/>
            <person name="Mardis E.R."/>
            <person name="Clifton S.W."/>
            <person name="Chissoe S.L."/>
            <person name="Marra M.A."/>
            <person name="Raymond C."/>
            <person name="Haugen E."/>
            <person name="Gillett W."/>
            <person name="Zhou Y."/>
            <person name="James R."/>
            <person name="Phelps K."/>
            <person name="Iadanoto S."/>
            <person name="Bubb K."/>
            <person name="Simms E."/>
            <person name="Levy R."/>
            <person name="Clendenning J."/>
            <person name="Kaul R."/>
            <person name="Kent W.J."/>
            <person name="Furey T.S."/>
            <person name="Baertsch R.A."/>
            <person name="Brent M.R."/>
            <person name="Keibler E."/>
            <person name="Flicek P."/>
            <person name="Bork P."/>
            <person name="Suyama M."/>
            <person name="Bailey J.A."/>
            <person name="Portnoy M.E."/>
            <person name="Torrents D."/>
            <person name="Chinwalla A.T."/>
            <person name="Gish W.R."/>
            <person name="Eddy S.R."/>
            <person name="McPherson J.D."/>
            <person name="Olson M.V."/>
            <person name="Eichler E.E."/>
            <person name="Green E.D."/>
            <person name="Waterston R.H."/>
            <person name="Wilson R.K."/>
        </authorList>
    </citation>
    <scope>NUCLEOTIDE SEQUENCE [LARGE SCALE GENOMIC DNA]</scope>
</reference>
<reference key="4">
    <citation type="journal article" date="2003" name="Science">
        <title>Human chromosome 7: DNA sequence and biology.</title>
        <authorList>
            <person name="Scherer S.W."/>
            <person name="Cheung J."/>
            <person name="MacDonald J.R."/>
            <person name="Osborne L.R."/>
            <person name="Nakabayashi K."/>
            <person name="Herbrick J.-A."/>
            <person name="Carson A.R."/>
            <person name="Parker-Katiraee L."/>
            <person name="Skaug J."/>
            <person name="Khaja R."/>
            <person name="Zhang J."/>
            <person name="Hudek A.K."/>
            <person name="Li M."/>
            <person name="Haddad M."/>
            <person name="Duggan G.E."/>
            <person name="Fernandez B.A."/>
            <person name="Kanematsu E."/>
            <person name="Gentles S."/>
            <person name="Christopoulos C.C."/>
            <person name="Choufani S."/>
            <person name="Kwasnicka D."/>
            <person name="Zheng X.H."/>
            <person name="Lai Z."/>
            <person name="Nusskern D.R."/>
            <person name="Zhang Q."/>
            <person name="Gu Z."/>
            <person name="Lu F."/>
            <person name="Zeesman S."/>
            <person name="Nowaczyk M.J."/>
            <person name="Teshima I."/>
            <person name="Chitayat D."/>
            <person name="Shuman C."/>
            <person name="Weksberg R."/>
            <person name="Zackai E.H."/>
            <person name="Grebe T.A."/>
            <person name="Cox S.R."/>
            <person name="Kirkpatrick S.J."/>
            <person name="Rahman N."/>
            <person name="Friedman J.M."/>
            <person name="Heng H.H.Q."/>
            <person name="Pelicci P.G."/>
            <person name="Lo-Coco F."/>
            <person name="Belloni E."/>
            <person name="Shaffer L.G."/>
            <person name="Pober B."/>
            <person name="Morton C.C."/>
            <person name="Gusella J.F."/>
            <person name="Bruns G.A.P."/>
            <person name="Korf B.R."/>
            <person name="Quade B.J."/>
            <person name="Ligon A.H."/>
            <person name="Ferguson H."/>
            <person name="Higgins A.W."/>
            <person name="Leach N.T."/>
            <person name="Herrick S.R."/>
            <person name="Lemyre E."/>
            <person name="Farra C.G."/>
            <person name="Kim H.-G."/>
            <person name="Summers A.M."/>
            <person name="Gripp K.W."/>
            <person name="Roberts W."/>
            <person name="Szatmari P."/>
            <person name="Winsor E.J.T."/>
            <person name="Grzeschik K.-H."/>
            <person name="Teebi A."/>
            <person name="Minassian B.A."/>
            <person name="Kere J."/>
            <person name="Armengol L."/>
            <person name="Pujana M.A."/>
            <person name="Estivill X."/>
            <person name="Wilson M.D."/>
            <person name="Koop B.F."/>
            <person name="Tosi S."/>
            <person name="Moore G.E."/>
            <person name="Boright A.P."/>
            <person name="Zlotorynski E."/>
            <person name="Kerem B."/>
            <person name="Kroisel P.M."/>
            <person name="Petek E."/>
            <person name="Oscier D.G."/>
            <person name="Mould S.J."/>
            <person name="Doehner H."/>
            <person name="Doehner K."/>
            <person name="Rommens J.M."/>
            <person name="Vincent J.B."/>
            <person name="Venter J.C."/>
            <person name="Li P.W."/>
            <person name="Mural R.J."/>
            <person name="Adams M.D."/>
            <person name="Tsui L.-C."/>
        </authorList>
    </citation>
    <scope>NUCLEOTIDE SEQUENCE [LARGE SCALE GENOMIC DNA]</scope>
</reference>
<reference key="5">
    <citation type="submission" date="2005-09" db="EMBL/GenBank/DDBJ databases">
        <authorList>
            <person name="Mural R.J."/>
            <person name="Istrail S."/>
            <person name="Sutton G.G."/>
            <person name="Florea L."/>
            <person name="Halpern A.L."/>
            <person name="Mobarry C.M."/>
            <person name="Lippert R."/>
            <person name="Walenz B."/>
            <person name="Shatkay H."/>
            <person name="Dew I."/>
            <person name="Miller J.R."/>
            <person name="Flanigan M.J."/>
            <person name="Edwards N.J."/>
            <person name="Bolanos R."/>
            <person name="Fasulo D."/>
            <person name="Halldorsson B.V."/>
            <person name="Hannenhalli S."/>
            <person name="Turner R."/>
            <person name="Yooseph S."/>
            <person name="Lu F."/>
            <person name="Nusskern D.R."/>
            <person name="Shue B.C."/>
            <person name="Zheng X.H."/>
            <person name="Zhong F."/>
            <person name="Delcher A.L."/>
            <person name="Huson D.H."/>
            <person name="Kravitz S.A."/>
            <person name="Mouchard L."/>
            <person name="Reinert K."/>
            <person name="Remington K.A."/>
            <person name="Clark A.G."/>
            <person name="Waterman M.S."/>
            <person name="Eichler E.E."/>
            <person name="Adams M.D."/>
            <person name="Hunkapiller M.W."/>
            <person name="Myers E.W."/>
            <person name="Venter J.C."/>
        </authorList>
    </citation>
    <scope>NUCLEOTIDE SEQUENCE [LARGE SCALE GENOMIC DNA]</scope>
</reference>
<reference key="6">
    <citation type="journal article" date="2004" name="Genome Res.">
        <title>The status, quality, and expansion of the NIH full-length cDNA project: the Mammalian Gene Collection (MGC).</title>
        <authorList>
            <consortium name="The MGC Project Team"/>
        </authorList>
    </citation>
    <scope>NUCLEOTIDE SEQUENCE [LARGE SCALE MRNA]</scope>
    <source>
        <tissue>Brain</tissue>
    </source>
</reference>
<dbReference type="EMBL" id="AL713672">
    <property type="protein sequence ID" value="CAD28478.1"/>
    <property type="molecule type" value="mRNA"/>
</dbReference>
<dbReference type="EMBL" id="AK290724">
    <property type="protein sequence ID" value="BAF83413.1"/>
    <property type="molecule type" value="mRNA"/>
</dbReference>
<dbReference type="EMBL" id="AK315452">
    <property type="protein sequence ID" value="BAG37839.1"/>
    <property type="molecule type" value="mRNA"/>
</dbReference>
<dbReference type="EMBL" id="AC005020">
    <property type="status" value="NOT_ANNOTATED_CDS"/>
    <property type="molecule type" value="Genomic_DNA"/>
</dbReference>
<dbReference type="EMBL" id="CH236956">
    <property type="protein sequence ID" value="EAL23872.1"/>
    <property type="molecule type" value="Genomic_DNA"/>
</dbReference>
<dbReference type="EMBL" id="CH471091">
    <property type="protein sequence ID" value="EAW76652.1"/>
    <property type="molecule type" value="Genomic_DNA"/>
</dbReference>
<dbReference type="EMBL" id="CH471091">
    <property type="protein sequence ID" value="EAW76653.1"/>
    <property type="molecule type" value="Genomic_DNA"/>
</dbReference>
<dbReference type="EMBL" id="BC040214">
    <property type="protein sequence ID" value="AAH40214.1"/>
    <property type="molecule type" value="mRNA"/>
</dbReference>
<dbReference type="EMBL" id="BC126337">
    <property type="protein sequence ID" value="AAI26338.1"/>
    <property type="molecule type" value="mRNA"/>
</dbReference>
<dbReference type="EMBL" id="BC130371">
    <property type="protein sequence ID" value="AAI30372.1"/>
    <property type="molecule type" value="mRNA"/>
</dbReference>
<dbReference type="EMBL" id="AK094113">
    <property type="protein sequence ID" value="BAC04288.1"/>
    <property type="molecule type" value="mRNA"/>
</dbReference>
<dbReference type="CCDS" id="CCDS5668.1"/>
<dbReference type="RefSeq" id="NP_659802.1">
    <property type="nucleotide sequence ID" value="NM_145111.4"/>
</dbReference>
<dbReference type="RefSeq" id="XP_011514213.1">
    <property type="nucleotide sequence ID" value="XM_011515911.2"/>
</dbReference>
<dbReference type="RefSeq" id="XP_011514215.1">
    <property type="nucleotide sequence ID" value="XM_011515913.2"/>
</dbReference>
<dbReference type="RefSeq" id="XP_024302449.1">
    <property type="nucleotide sequence ID" value="XM_024446681.2"/>
</dbReference>
<dbReference type="RefSeq" id="XP_047275978.1">
    <property type="nucleotide sequence ID" value="XM_047420022.1"/>
</dbReference>
<dbReference type="RefSeq" id="XP_054213506.1">
    <property type="nucleotide sequence ID" value="XM_054357531.1"/>
</dbReference>
<dbReference type="BioGRID" id="128754">
    <property type="interactions" value="12"/>
</dbReference>
<dbReference type="FunCoup" id="Q8TCP9">
    <property type="interactions" value="60"/>
</dbReference>
<dbReference type="IntAct" id="Q8TCP9">
    <property type="interactions" value="8"/>
</dbReference>
<dbReference type="MINT" id="Q8TCP9"/>
<dbReference type="STRING" id="9606.ENSP00000411372"/>
<dbReference type="iPTMnet" id="Q8TCP9"/>
<dbReference type="PhosphoSitePlus" id="Q8TCP9"/>
<dbReference type="BioMuta" id="FAM200A"/>
<dbReference type="DMDM" id="74730599"/>
<dbReference type="jPOST" id="Q8TCP9"/>
<dbReference type="MassIVE" id="Q8TCP9"/>
<dbReference type="PaxDb" id="9606-ENSP00000411372"/>
<dbReference type="PeptideAtlas" id="Q8TCP9"/>
<dbReference type="ProteomicsDB" id="74149"/>
<dbReference type="Antibodypedia" id="21644">
    <property type="antibodies" value="72 antibodies from 17 providers"/>
</dbReference>
<dbReference type="DNASU" id="221786"/>
<dbReference type="Ensembl" id="ENST00000449309.2">
    <property type="protein sequence ID" value="ENSP00000411372.1"/>
    <property type="gene ID" value="ENSG00000221909.3"/>
</dbReference>
<dbReference type="GeneID" id="221786"/>
<dbReference type="KEGG" id="hsa:221786"/>
<dbReference type="MANE-Select" id="ENST00000449309.2">
    <property type="protein sequence ID" value="ENSP00000411372.1"/>
    <property type="RefSeq nucleotide sequence ID" value="NM_145111.4"/>
    <property type="RefSeq protein sequence ID" value="NP_659802.1"/>
</dbReference>
<dbReference type="UCSC" id="uc003ura.4">
    <property type="organism name" value="human"/>
</dbReference>
<dbReference type="AGR" id="HGNC:25401"/>
<dbReference type="CTD" id="221786"/>
<dbReference type="GeneCards" id="FAM200A"/>
<dbReference type="HGNC" id="HGNC:25401">
    <property type="gene designation" value="FAM200A"/>
</dbReference>
<dbReference type="HPA" id="ENSG00000221909">
    <property type="expression patterns" value="Low tissue specificity"/>
</dbReference>
<dbReference type="neXtProt" id="NX_Q8TCP9"/>
<dbReference type="OpenTargets" id="ENSG00000221909"/>
<dbReference type="PharmGKB" id="PA165618089"/>
<dbReference type="VEuPathDB" id="HostDB:ENSG00000221909"/>
<dbReference type="eggNOG" id="ENOG502SICS">
    <property type="taxonomic scope" value="Eukaryota"/>
</dbReference>
<dbReference type="GeneTree" id="ENSGT00940000164024"/>
<dbReference type="HOGENOM" id="CLU_021316_5_0_1"/>
<dbReference type="InParanoid" id="Q8TCP9"/>
<dbReference type="OMA" id="FTLRNYY"/>
<dbReference type="OrthoDB" id="10061052at2759"/>
<dbReference type="PAN-GO" id="Q8TCP9">
    <property type="GO annotations" value="0 GO annotations based on evolutionary models"/>
</dbReference>
<dbReference type="PhylomeDB" id="Q8TCP9"/>
<dbReference type="TreeFam" id="TF328297"/>
<dbReference type="PathwayCommons" id="Q8TCP9"/>
<dbReference type="SignaLink" id="Q8TCP9"/>
<dbReference type="BioGRID-ORCS" id="221786">
    <property type="hits" value="13 hits in 1146 CRISPR screens"/>
</dbReference>
<dbReference type="GeneWiki" id="FAM200A"/>
<dbReference type="GenomeRNAi" id="221786"/>
<dbReference type="Pharos" id="Q8TCP9">
    <property type="development level" value="Tdark"/>
</dbReference>
<dbReference type="PRO" id="PR:Q8TCP9"/>
<dbReference type="Proteomes" id="UP000005640">
    <property type="component" value="Chromosome 7"/>
</dbReference>
<dbReference type="RNAct" id="Q8TCP9">
    <property type="molecule type" value="protein"/>
</dbReference>
<dbReference type="Bgee" id="ENSG00000221909">
    <property type="expression patterns" value="Expressed in primordial germ cell in gonad and 165 other cell types or tissues"/>
</dbReference>
<dbReference type="ExpressionAtlas" id="Q8TCP9">
    <property type="expression patterns" value="baseline and differential"/>
</dbReference>
<dbReference type="GO" id="GO:0016020">
    <property type="term" value="C:membrane"/>
    <property type="evidence" value="ECO:0007669"/>
    <property type="project" value="UniProtKB-SubCell"/>
</dbReference>
<dbReference type="InterPro" id="IPR012337">
    <property type="entry name" value="RNaseH-like_sf"/>
</dbReference>
<dbReference type="PANTHER" id="PTHR45913">
    <property type="entry name" value="EPM2A-INTERACTING PROTEIN 1"/>
    <property type="match status" value="1"/>
</dbReference>
<dbReference type="PANTHER" id="PTHR45913:SF19">
    <property type="entry name" value="LOW QUALITY PROTEIN: ZINC FINGER BED DOMAIN-CONTAINING PROTEIN 5-LIKE"/>
    <property type="match status" value="1"/>
</dbReference>
<dbReference type="SUPFAM" id="SSF53098">
    <property type="entry name" value="Ribonuclease H-like"/>
    <property type="match status" value="1"/>
</dbReference>